<accession>P0C8N6</accession>
<comment type="subcellular location">
    <subcellularLocation>
        <location evidence="2">Nucleus inner membrane</location>
        <topology evidence="3">Multi-pass membrane protein</topology>
        <orientation evidence="1">Nucleoplasmic side</orientation>
    </subcellularLocation>
</comment>
<comment type="similarity">
    <text evidence="4">Belongs to the NEMP family.</text>
</comment>
<proteinExistence type="inferred from homology"/>
<sequence length="421" mass="47681">MPPGSWWLVLWLPPLATLPAGAVPQEEAAMSVPRCKSLKETDLIKTSVSDCYCYNQHSQIEWTYMWSTVQVTVTSPGLLSIVYITGRHTCQHTETILSFLKCVTHNFWTAEEAKEVTIVFSPYGETVCFSVKPVGSLLTYAVSVNRNVVDFRLFLVFATGIFLFFYAKTLSQSPVFYYSSGTVLGILMTLVFVLLMTKKHIPKYSTFGALMIGCWFASVYVLCQLMENLKWLWCGNRIYVLGYVLVVGLCSFSACYSRGPPADEGSRDLLMWALRFLSLVLVYTGMAISQFAYAVMILLLLSWTRHYLLRAFSCLRWKVRQWFATRALVVRYLTDDEYREQAEAETASALEELRQACCRPDFPSWLAVSRLQAPKKFAEFVLGASHLSPEEVSTHEKQYGLGGAFLEEQLFSLQTESLPAS</sequence>
<dbReference type="EMBL" id="AABR00000000">
    <property type="status" value="NOT_ANNOTATED_CDS"/>
    <property type="molecule type" value="Genomic_DNA"/>
</dbReference>
<dbReference type="RefSeq" id="NP_001128114.1">
    <property type="nucleotide sequence ID" value="NM_001134642.1"/>
</dbReference>
<dbReference type="FunCoup" id="P0C8N6">
    <property type="interactions" value="2025"/>
</dbReference>
<dbReference type="STRING" id="10116.ENSRNOP00000032860"/>
<dbReference type="PhosphoSitePlus" id="P0C8N6"/>
<dbReference type="PaxDb" id="10116-ENSRNOP00000032860"/>
<dbReference type="Ensembl" id="ENSRNOT00000029204.4">
    <property type="protein sequence ID" value="ENSRNOP00000032860.3"/>
    <property type="gene ID" value="ENSRNOG00000012924.6"/>
</dbReference>
<dbReference type="GeneID" id="503257"/>
<dbReference type="KEGG" id="rno:503257"/>
<dbReference type="UCSC" id="RGD:1560421">
    <property type="organism name" value="rat"/>
</dbReference>
<dbReference type="AGR" id="RGD:1560421"/>
<dbReference type="CTD" id="100131211"/>
<dbReference type="RGD" id="1560421">
    <property type="gene designation" value="Nemp2"/>
</dbReference>
<dbReference type="eggNOG" id="KOG3817">
    <property type="taxonomic scope" value="Eukaryota"/>
</dbReference>
<dbReference type="GeneTree" id="ENSGT00390000002174"/>
<dbReference type="HOGENOM" id="CLU_025225_0_0_1"/>
<dbReference type="InParanoid" id="P0C8N6"/>
<dbReference type="OMA" id="IWSTLQV"/>
<dbReference type="PhylomeDB" id="P0C8N6"/>
<dbReference type="TreeFam" id="TF314831"/>
<dbReference type="PRO" id="PR:P0C8N6"/>
<dbReference type="Proteomes" id="UP000002494">
    <property type="component" value="Chromosome 9"/>
</dbReference>
<dbReference type="Bgee" id="ENSRNOG00000012924">
    <property type="expression patterns" value="Expressed in thymus and 19 other cell types or tissues"/>
</dbReference>
<dbReference type="GO" id="GO:0005635">
    <property type="term" value="C:nuclear envelope"/>
    <property type="evidence" value="ECO:0000318"/>
    <property type="project" value="GO_Central"/>
</dbReference>
<dbReference type="GO" id="GO:0005637">
    <property type="term" value="C:nuclear inner membrane"/>
    <property type="evidence" value="ECO:0007669"/>
    <property type="project" value="UniProtKB-SubCell"/>
</dbReference>
<dbReference type="InterPro" id="IPR019358">
    <property type="entry name" value="NEMP_fam"/>
</dbReference>
<dbReference type="PANTHER" id="PTHR13598">
    <property type="entry name" value="AT07567P-RELATED"/>
    <property type="match status" value="1"/>
</dbReference>
<dbReference type="PANTHER" id="PTHR13598:SF3">
    <property type="entry name" value="NUCLEAR ENVELOPE INTEGRAL MEMBRANE PROTEIN 2"/>
    <property type="match status" value="1"/>
</dbReference>
<dbReference type="Pfam" id="PF10225">
    <property type="entry name" value="NEMP"/>
    <property type="match status" value="1"/>
</dbReference>
<gene>
    <name type="primary">Nemp2</name>
    <name type="synonym">Tmem194b</name>
</gene>
<reference key="1">
    <citation type="journal article" date="2004" name="Nature">
        <title>Genome sequence of the Brown Norway rat yields insights into mammalian evolution.</title>
        <authorList>
            <person name="Gibbs R.A."/>
            <person name="Weinstock G.M."/>
            <person name="Metzker M.L."/>
            <person name="Muzny D.M."/>
            <person name="Sodergren E.J."/>
            <person name="Scherer S."/>
            <person name="Scott G."/>
            <person name="Steffen D."/>
            <person name="Worley K.C."/>
            <person name="Burch P.E."/>
            <person name="Okwuonu G."/>
            <person name="Hines S."/>
            <person name="Lewis L."/>
            <person name="Deramo C."/>
            <person name="Delgado O."/>
            <person name="Dugan-Rocha S."/>
            <person name="Miner G."/>
            <person name="Morgan M."/>
            <person name="Hawes A."/>
            <person name="Gill R."/>
            <person name="Holt R.A."/>
            <person name="Adams M.D."/>
            <person name="Amanatides P.G."/>
            <person name="Baden-Tillson H."/>
            <person name="Barnstead M."/>
            <person name="Chin S."/>
            <person name="Evans C.A."/>
            <person name="Ferriera S."/>
            <person name="Fosler C."/>
            <person name="Glodek A."/>
            <person name="Gu Z."/>
            <person name="Jennings D."/>
            <person name="Kraft C.L."/>
            <person name="Nguyen T."/>
            <person name="Pfannkoch C.M."/>
            <person name="Sitter C."/>
            <person name="Sutton G.G."/>
            <person name="Venter J.C."/>
            <person name="Woodage T."/>
            <person name="Smith D."/>
            <person name="Lee H.-M."/>
            <person name="Gustafson E."/>
            <person name="Cahill P."/>
            <person name="Kana A."/>
            <person name="Doucette-Stamm L."/>
            <person name="Weinstock K."/>
            <person name="Fechtel K."/>
            <person name="Weiss R.B."/>
            <person name="Dunn D.M."/>
            <person name="Green E.D."/>
            <person name="Blakesley R.W."/>
            <person name="Bouffard G.G."/>
            <person name="De Jong P.J."/>
            <person name="Osoegawa K."/>
            <person name="Zhu B."/>
            <person name="Marra M."/>
            <person name="Schein J."/>
            <person name="Bosdet I."/>
            <person name="Fjell C."/>
            <person name="Jones S."/>
            <person name="Krzywinski M."/>
            <person name="Mathewson C."/>
            <person name="Siddiqui A."/>
            <person name="Wye N."/>
            <person name="McPherson J."/>
            <person name="Zhao S."/>
            <person name="Fraser C.M."/>
            <person name="Shetty J."/>
            <person name="Shatsman S."/>
            <person name="Geer K."/>
            <person name="Chen Y."/>
            <person name="Abramzon S."/>
            <person name="Nierman W.C."/>
            <person name="Havlak P.H."/>
            <person name="Chen R."/>
            <person name="Durbin K.J."/>
            <person name="Egan A."/>
            <person name="Ren Y."/>
            <person name="Song X.-Z."/>
            <person name="Li B."/>
            <person name="Liu Y."/>
            <person name="Qin X."/>
            <person name="Cawley S."/>
            <person name="Cooney A.J."/>
            <person name="D'Souza L.M."/>
            <person name="Martin K."/>
            <person name="Wu J.Q."/>
            <person name="Gonzalez-Garay M.L."/>
            <person name="Jackson A.R."/>
            <person name="Kalafus K.J."/>
            <person name="McLeod M.P."/>
            <person name="Milosavljevic A."/>
            <person name="Virk D."/>
            <person name="Volkov A."/>
            <person name="Wheeler D.A."/>
            <person name="Zhang Z."/>
            <person name="Bailey J.A."/>
            <person name="Eichler E.E."/>
            <person name="Tuzun E."/>
            <person name="Birney E."/>
            <person name="Mongin E."/>
            <person name="Ureta-Vidal A."/>
            <person name="Woodwark C."/>
            <person name="Zdobnov E."/>
            <person name="Bork P."/>
            <person name="Suyama M."/>
            <person name="Torrents D."/>
            <person name="Alexandersson M."/>
            <person name="Trask B.J."/>
            <person name="Young J.M."/>
            <person name="Huang H."/>
            <person name="Wang H."/>
            <person name="Xing H."/>
            <person name="Daniels S."/>
            <person name="Gietzen D."/>
            <person name="Schmidt J."/>
            <person name="Stevens K."/>
            <person name="Vitt U."/>
            <person name="Wingrove J."/>
            <person name="Camara F."/>
            <person name="Mar Alba M."/>
            <person name="Abril J.F."/>
            <person name="Guigo R."/>
            <person name="Smit A."/>
            <person name="Dubchak I."/>
            <person name="Rubin E.M."/>
            <person name="Couronne O."/>
            <person name="Poliakov A."/>
            <person name="Huebner N."/>
            <person name="Ganten D."/>
            <person name="Goesele C."/>
            <person name="Hummel O."/>
            <person name="Kreitler T."/>
            <person name="Lee Y.-A."/>
            <person name="Monti J."/>
            <person name="Schulz H."/>
            <person name="Zimdahl H."/>
            <person name="Himmelbauer H."/>
            <person name="Lehrach H."/>
            <person name="Jacob H.J."/>
            <person name="Bromberg S."/>
            <person name="Gullings-Handley J."/>
            <person name="Jensen-Seaman M.I."/>
            <person name="Kwitek A.E."/>
            <person name="Lazar J."/>
            <person name="Pasko D."/>
            <person name="Tonellato P.J."/>
            <person name="Twigger S."/>
            <person name="Ponting C.P."/>
            <person name="Duarte J.M."/>
            <person name="Rice S."/>
            <person name="Goodstadt L."/>
            <person name="Beatson S.A."/>
            <person name="Emes R.D."/>
            <person name="Winter E.E."/>
            <person name="Webber C."/>
            <person name="Brandt P."/>
            <person name="Nyakatura G."/>
            <person name="Adetobi M."/>
            <person name="Chiaromonte F."/>
            <person name="Elnitski L."/>
            <person name="Eswara P."/>
            <person name="Hardison R.C."/>
            <person name="Hou M."/>
            <person name="Kolbe D."/>
            <person name="Makova K."/>
            <person name="Miller W."/>
            <person name="Nekrutenko A."/>
            <person name="Riemer C."/>
            <person name="Schwartz S."/>
            <person name="Taylor J."/>
            <person name="Yang S."/>
            <person name="Zhang Y."/>
            <person name="Lindpaintner K."/>
            <person name="Andrews T.D."/>
            <person name="Caccamo M."/>
            <person name="Clamp M."/>
            <person name="Clarke L."/>
            <person name="Curwen V."/>
            <person name="Durbin R.M."/>
            <person name="Eyras E."/>
            <person name="Searle S.M."/>
            <person name="Cooper G.M."/>
            <person name="Batzoglou S."/>
            <person name="Brudno M."/>
            <person name="Sidow A."/>
            <person name="Stone E.A."/>
            <person name="Payseur B.A."/>
            <person name="Bourque G."/>
            <person name="Lopez-Otin C."/>
            <person name="Puente X.S."/>
            <person name="Chakrabarti K."/>
            <person name="Chatterji S."/>
            <person name="Dewey C."/>
            <person name="Pachter L."/>
            <person name="Bray N."/>
            <person name="Yap V.B."/>
            <person name="Caspi A."/>
            <person name="Tesler G."/>
            <person name="Pevzner P.A."/>
            <person name="Haussler D."/>
            <person name="Roskin K.M."/>
            <person name="Baertsch R."/>
            <person name="Clawson H."/>
            <person name="Furey T.S."/>
            <person name="Hinrichs A.S."/>
            <person name="Karolchik D."/>
            <person name="Kent W.J."/>
            <person name="Rosenbloom K.R."/>
            <person name="Trumbower H."/>
            <person name="Weirauch M."/>
            <person name="Cooper D.N."/>
            <person name="Stenson P.D."/>
            <person name="Ma B."/>
            <person name="Brent M."/>
            <person name="Arumugam M."/>
            <person name="Shteynberg D."/>
            <person name="Copley R.R."/>
            <person name="Taylor M.S."/>
            <person name="Riethman H."/>
            <person name="Mudunuri U."/>
            <person name="Peterson J."/>
            <person name="Guyer M."/>
            <person name="Felsenfeld A."/>
            <person name="Old S."/>
            <person name="Mockrin S."/>
            <person name="Collins F.S."/>
        </authorList>
    </citation>
    <scope>NUCLEOTIDE SEQUENCE [LARGE SCALE GENOMIC DNA]</scope>
    <source>
        <strain>Brown Norway</strain>
    </source>
</reference>
<evidence type="ECO:0000250" key="1">
    <source>
        <dbReference type="UniProtKB" id="B9X187"/>
    </source>
</evidence>
<evidence type="ECO:0000250" key="2">
    <source>
        <dbReference type="UniProtKB" id="Q6ZQE4"/>
    </source>
</evidence>
<evidence type="ECO:0000255" key="3"/>
<evidence type="ECO:0000305" key="4"/>
<feature type="signal peptide" evidence="3">
    <location>
        <begin position="1"/>
        <end position="22"/>
    </location>
</feature>
<feature type="chain" id="PRO_0000361680" description="Nuclear envelope integral membrane protein 2">
    <location>
        <begin position="23"/>
        <end position="421"/>
    </location>
</feature>
<feature type="transmembrane region" description="Helical" evidence="3">
    <location>
        <begin position="147"/>
        <end position="167"/>
    </location>
</feature>
<feature type="transmembrane region" description="Helical" evidence="3">
    <location>
        <begin position="175"/>
        <end position="195"/>
    </location>
</feature>
<feature type="transmembrane region" description="Helical" evidence="3">
    <location>
        <begin position="206"/>
        <end position="226"/>
    </location>
</feature>
<feature type="transmembrane region" description="Helical" evidence="3">
    <location>
        <begin position="232"/>
        <end position="252"/>
    </location>
</feature>
<feature type="transmembrane region" description="Helical" evidence="3">
    <location>
        <begin position="279"/>
        <end position="299"/>
    </location>
</feature>
<protein>
    <recommendedName>
        <fullName>Nuclear envelope integral membrane protein 2</fullName>
    </recommendedName>
</protein>
<name>NEMP2_RAT</name>
<organism>
    <name type="scientific">Rattus norvegicus</name>
    <name type="common">Rat</name>
    <dbReference type="NCBI Taxonomy" id="10116"/>
    <lineage>
        <taxon>Eukaryota</taxon>
        <taxon>Metazoa</taxon>
        <taxon>Chordata</taxon>
        <taxon>Craniata</taxon>
        <taxon>Vertebrata</taxon>
        <taxon>Euteleostomi</taxon>
        <taxon>Mammalia</taxon>
        <taxon>Eutheria</taxon>
        <taxon>Euarchontoglires</taxon>
        <taxon>Glires</taxon>
        <taxon>Rodentia</taxon>
        <taxon>Myomorpha</taxon>
        <taxon>Muroidea</taxon>
        <taxon>Muridae</taxon>
        <taxon>Murinae</taxon>
        <taxon>Rattus</taxon>
    </lineage>
</organism>
<keyword id="KW-0472">Membrane</keyword>
<keyword id="KW-0539">Nucleus</keyword>
<keyword id="KW-1185">Reference proteome</keyword>
<keyword id="KW-0732">Signal</keyword>
<keyword id="KW-0812">Transmembrane</keyword>
<keyword id="KW-1133">Transmembrane helix</keyword>